<protein>
    <recommendedName>
        <fullName evidence="1">Probable phosphoketolase</fullName>
        <ecNumber evidence="1">4.1.2.-</ecNumber>
    </recommendedName>
</protein>
<keyword id="KW-0456">Lyase</keyword>
<keyword id="KW-0786">Thiamine pyrophosphate</keyword>
<organism>
    <name type="scientific">Mycobacterium avium (strain 104)</name>
    <dbReference type="NCBI Taxonomy" id="243243"/>
    <lineage>
        <taxon>Bacteria</taxon>
        <taxon>Bacillati</taxon>
        <taxon>Actinomycetota</taxon>
        <taxon>Actinomycetes</taxon>
        <taxon>Mycobacteriales</taxon>
        <taxon>Mycobacteriaceae</taxon>
        <taxon>Mycobacterium</taxon>
        <taxon>Mycobacterium avium complex (MAC)</taxon>
    </lineage>
</organism>
<sequence>MSLETSTTTPAGSPLSDRELDLIDKYWRAANYLSVGQIYLLDNPLLKEPLSAEHVKPRLLGHWGTTPGLNLVYAHLNRIIRNRDADVIYVTGPGHGGPGLVANAYLEGTYSEVYTGIEEDAEGLRKLFRQFSFPGGIPSHVAAQTPGSIHEGGELGYALVHAYGAAFDNPYLVVACVIGDGEAETGPLAAGWHSNKFLNPVTDGAVLPILALNGYKIANPTVLARIPHTELEALLRGYGYRPITVAGDDPTDVHRQLAAALDEAFDDIAAIQGVARGGGEVQRPVWPMIVLRTPKGWTGPKVVDGKRVEGTWRSHQVPLAETHDNPEHRAQLEEWLRSYGPEQLFDDDGRLRAELRALAPTGDRRMSANPHANGGLLLHDLDLPDFRDYAVPVTRPGSVTHEATRVLGTFLRDVIARNKDRFRMMGPDETASNRLDAVYGATEKVWLSATEPDDEHLAPDGRVMEVLSEHLCQGWLEGYLLTGRHGLFNCYEAFVHIVDSMLNQHAKWLATSRELPWRRPIASLNYLLTSHVWRQDHNGASHQDPGFIDLVANKRAELTRVYLPPDGNTLLSVADHCLRSRDYINVIVAGKQPALAYLDMDAAIAHCTRGLGIWDWASTARSIGAEPDVVLACAGDIPTLETLAAADILRRELPDLAVRVVNVVDLMRLQPDSEHPHGLPDREFDALFTRDRPVIFAYHGYPWLIHRLTYRRANHAQLHVRGFKERGTTTTPFDMVMLNDLDRFHLVIDVLDRVEGLASRAAMLRQRMVDARLAARMYTREHGEDDPAIANWTWEPSERNSRSE</sequence>
<gene>
    <name type="ordered locus">MAV_2855</name>
</gene>
<feature type="chain" id="PRO_1000068388" description="Probable phosphoketolase">
    <location>
        <begin position="1"/>
        <end position="804"/>
    </location>
</feature>
<evidence type="ECO:0000255" key="1">
    <source>
        <dbReference type="HAMAP-Rule" id="MF_01403"/>
    </source>
</evidence>
<proteinExistence type="inferred from homology"/>
<comment type="cofactor">
    <cofactor evidence="1">
        <name>thiamine diphosphate</name>
        <dbReference type="ChEBI" id="CHEBI:58937"/>
    </cofactor>
</comment>
<comment type="similarity">
    <text evidence="1">Belongs to the XFP family.</text>
</comment>
<name>PHK_MYCA1</name>
<reference key="1">
    <citation type="submission" date="2006-10" db="EMBL/GenBank/DDBJ databases">
        <authorList>
            <person name="Fleischmann R.D."/>
            <person name="Dodson R.J."/>
            <person name="Haft D.H."/>
            <person name="Merkel J.S."/>
            <person name="Nelson W.C."/>
            <person name="Fraser C.M."/>
        </authorList>
    </citation>
    <scope>NUCLEOTIDE SEQUENCE [LARGE SCALE GENOMIC DNA]</scope>
    <source>
        <strain>104</strain>
    </source>
</reference>
<accession>A0QGK3</accession>
<dbReference type="EC" id="4.1.2.-" evidence="1"/>
<dbReference type="EMBL" id="CP000479">
    <property type="protein sequence ID" value="ABK66302.1"/>
    <property type="molecule type" value="Genomic_DNA"/>
</dbReference>
<dbReference type="RefSeq" id="WP_011725098.1">
    <property type="nucleotide sequence ID" value="NC_008595.1"/>
</dbReference>
<dbReference type="SMR" id="A0QGK3"/>
<dbReference type="KEGG" id="mav:MAV_2855"/>
<dbReference type="HOGENOM" id="CLU_013954_2_0_11"/>
<dbReference type="Proteomes" id="UP000001574">
    <property type="component" value="Chromosome"/>
</dbReference>
<dbReference type="GO" id="GO:0016832">
    <property type="term" value="F:aldehyde-lyase activity"/>
    <property type="evidence" value="ECO:0007669"/>
    <property type="project" value="UniProtKB-UniRule"/>
</dbReference>
<dbReference type="GO" id="GO:0000287">
    <property type="term" value="F:magnesium ion binding"/>
    <property type="evidence" value="ECO:0007669"/>
    <property type="project" value="UniProtKB-ARBA"/>
</dbReference>
<dbReference type="GO" id="GO:0005975">
    <property type="term" value="P:carbohydrate metabolic process"/>
    <property type="evidence" value="ECO:0007669"/>
    <property type="project" value="InterPro"/>
</dbReference>
<dbReference type="CDD" id="cd02011">
    <property type="entry name" value="TPP_PK"/>
    <property type="match status" value="1"/>
</dbReference>
<dbReference type="FunFam" id="3.40.50.970:FF:000091">
    <property type="entry name" value="Xylulose-5-phosphate/fructose-6-phosphate phosphoketolase"/>
    <property type="match status" value="1"/>
</dbReference>
<dbReference type="Gene3D" id="3.40.50.920">
    <property type="match status" value="1"/>
</dbReference>
<dbReference type="Gene3D" id="3.40.50.970">
    <property type="match status" value="2"/>
</dbReference>
<dbReference type="HAMAP" id="MF_01403">
    <property type="entry name" value="Phosphoketolase"/>
    <property type="match status" value="1"/>
</dbReference>
<dbReference type="InterPro" id="IPR023962">
    <property type="entry name" value="Phosphoketolase"/>
</dbReference>
<dbReference type="InterPro" id="IPR029061">
    <property type="entry name" value="THDP-binding"/>
</dbReference>
<dbReference type="InterPro" id="IPR009014">
    <property type="entry name" value="Transketo_C/PFOR_II"/>
</dbReference>
<dbReference type="InterPro" id="IPR005593">
    <property type="entry name" value="Xul5P/Fru6P_PKetolase"/>
</dbReference>
<dbReference type="InterPro" id="IPR018969">
    <property type="entry name" value="Xul5P/Fru6P_PKetolase_C"/>
</dbReference>
<dbReference type="InterPro" id="IPR019790">
    <property type="entry name" value="Xul5P/Fru6P_PKetolase_CS"/>
</dbReference>
<dbReference type="InterPro" id="IPR018970">
    <property type="entry name" value="Xul5P/Fru6P_PKetolase_N"/>
</dbReference>
<dbReference type="InterPro" id="IPR019789">
    <property type="entry name" value="Xul5P/Fru6P_PKetolase_ThDP_BS"/>
</dbReference>
<dbReference type="NCBIfam" id="NF003617">
    <property type="entry name" value="PRK05261.1-2"/>
    <property type="match status" value="1"/>
</dbReference>
<dbReference type="NCBIfam" id="NF003619">
    <property type="entry name" value="PRK05261.1-4"/>
    <property type="match status" value="1"/>
</dbReference>
<dbReference type="NCBIfam" id="NF003621">
    <property type="entry name" value="PRK05261.1-6"/>
    <property type="match status" value="1"/>
</dbReference>
<dbReference type="PANTHER" id="PTHR31273">
    <property type="entry name" value="PHOSPHOKETOLASE-RELATED"/>
    <property type="match status" value="1"/>
</dbReference>
<dbReference type="PANTHER" id="PTHR31273:SF0">
    <property type="entry name" value="PHOSPHOKETOLASE-RELATED"/>
    <property type="match status" value="1"/>
</dbReference>
<dbReference type="Pfam" id="PF03894">
    <property type="entry name" value="XFP"/>
    <property type="match status" value="1"/>
</dbReference>
<dbReference type="Pfam" id="PF09363">
    <property type="entry name" value="XFP_C"/>
    <property type="match status" value="1"/>
</dbReference>
<dbReference type="Pfam" id="PF09364">
    <property type="entry name" value="XFP_N"/>
    <property type="match status" value="1"/>
</dbReference>
<dbReference type="PIRSF" id="PIRSF017245">
    <property type="entry name" value="Phosphoketolase"/>
    <property type="match status" value="1"/>
</dbReference>
<dbReference type="SUPFAM" id="SSF52518">
    <property type="entry name" value="Thiamin diphosphate-binding fold (THDP-binding)"/>
    <property type="match status" value="2"/>
</dbReference>
<dbReference type="PROSITE" id="PS60002">
    <property type="entry name" value="PHOSPHOKETOLASE_1"/>
    <property type="match status" value="1"/>
</dbReference>
<dbReference type="PROSITE" id="PS60003">
    <property type="entry name" value="PHOSPHOKETOLASE_2"/>
    <property type="match status" value="1"/>
</dbReference>